<reference key="1">
    <citation type="submission" date="2007-03" db="EMBL/GenBank/DDBJ databases">
        <title>Complete sequence of Prosthecochloris vibrioformis DSM 265.</title>
        <authorList>
            <consortium name="US DOE Joint Genome Institute"/>
            <person name="Copeland A."/>
            <person name="Lucas S."/>
            <person name="Lapidus A."/>
            <person name="Barry K."/>
            <person name="Detter J.C."/>
            <person name="Glavina del Rio T."/>
            <person name="Hammon N."/>
            <person name="Israni S."/>
            <person name="Pitluck S."/>
            <person name="Schmutz J."/>
            <person name="Larimer F."/>
            <person name="Land M."/>
            <person name="Hauser L."/>
            <person name="Mikhailova N."/>
            <person name="Li T."/>
            <person name="Overmann J."/>
            <person name="Schuster S.C."/>
            <person name="Bryant D.A."/>
            <person name="Richardson P."/>
        </authorList>
    </citation>
    <scope>NUCLEOTIDE SEQUENCE [LARGE SCALE GENOMIC DNA]</scope>
    <source>
        <strain>DSM 265 / 1930</strain>
    </source>
</reference>
<name>SUCC_CHLPM</name>
<feature type="chain" id="PRO_1000082162" description="Succinate--CoA ligase [ADP-forming] subunit beta">
    <location>
        <begin position="1"/>
        <end position="391"/>
    </location>
</feature>
<feature type="domain" description="ATP-grasp" evidence="1">
    <location>
        <begin position="9"/>
        <end position="248"/>
    </location>
</feature>
<feature type="binding site" evidence="1">
    <location>
        <position position="50"/>
    </location>
    <ligand>
        <name>ATP</name>
        <dbReference type="ChEBI" id="CHEBI:30616"/>
    </ligand>
</feature>
<feature type="binding site" evidence="1">
    <location>
        <begin position="57"/>
        <end position="59"/>
    </location>
    <ligand>
        <name>ATP</name>
        <dbReference type="ChEBI" id="CHEBI:30616"/>
    </ligand>
</feature>
<feature type="binding site" evidence="1">
    <location>
        <position position="103"/>
    </location>
    <ligand>
        <name>ATP</name>
        <dbReference type="ChEBI" id="CHEBI:30616"/>
    </ligand>
</feature>
<feature type="binding site" evidence="1">
    <location>
        <position position="106"/>
    </location>
    <ligand>
        <name>ATP</name>
        <dbReference type="ChEBI" id="CHEBI:30616"/>
    </ligand>
</feature>
<feature type="binding site" evidence="1">
    <location>
        <position position="111"/>
    </location>
    <ligand>
        <name>ATP</name>
        <dbReference type="ChEBI" id="CHEBI:30616"/>
    </ligand>
</feature>
<feature type="binding site" evidence="1">
    <location>
        <position position="203"/>
    </location>
    <ligand>
        <name>Mg(2+)</name>
        <dbReference type="ChEBI" id="CHEBI:18420"/>
    </ligand>
</feature>
<feature type="binding site" evidence="1">
    <location>
        <position position="217"/>
    </location>
    <ligand>
        <name>Mg(2+)</name>
        <dbReference type="ChEBI" id="CHEBI:18420"/>
    </ligand>
</feature>
<feature type="binding site" evidence="1">
    <location>
        <position position="268"/>
    </location>
    <ligand>
        <name>substrate</name>
        <note>ligand shared with subunit alpha</note>
    </ligand>
</feature>
<feature type="binding site" evidence="1">
    <location>
        <begin position="325"/>
        <end position="327"/>
    </location>
    <ligand>
        <name>substrate</name>
        <note>ligand shared with subunit alpha</note>
    </ligand>
</feature>
<sequence>MNIHEYQGKDILRKFGVAVPKGIVAHSPEEAKQAAEQLFEEQSSPVVVVKAQIHAGGRGKAGGVKLAKSPEEAYEIASQMIGTTLVTHQTGPEGKEVRRLLVEEGMNIDREFYVGITLDRATSQNVLMISTEGGMEIEKVAEETPDRLLKIQVDPLFGLQGFQAREAAFFLGLEGEQFRSAVSFIMSLYKAYTSIDAALAEINPLVVTKEGRVLALDAKINFDSNALYRHKDFLELRDITEEDPFEVEASKSNLNYVRLDGNVGCMVNGAGLAMGTMDIIQLAGGKPANFLDVGGGASPQTVEEGFKIILSDKNVKAILVNIFGGIVRCDRVAGGIIEAAKKIGLNLPVIVRLEGTNADIAQKMLDESGLNLIAADGLKDAAQKVTEALSA</sequence>
<accession>A4SDL6</accession>
<dbReference type="EC" id="6.2.1.5" evidence="1"/>
<dbReference type="EMBL" id="CP000607">
    <property type="protein sequence ID" value="ABP36575.1"/>
    <property type="molecule type" value="Genomic_DNA"/>
</dbReference>
<dbReference type="SMR" id="A4SDL6"/>
<dbReference type="STRING" id="290318.Cvib_0553"/>
<dbReference type="KEGG" id="pvi:Cvib_0553"/>
<dbReference type="eggNOG" id="COG0045">
    <property type="taxonomic scope" value="Bacteria"/>
</dbReference>
<dbReference type="HOGENOM" id="CLU_037430_0_2_10"/>
<dbReference type="OrthoDB" id="9802602at2"/>
<dbReference type="UniPathway" id="UPA00223">
    <property type="reaction ID" value="UER00999"/>
</dbReference>
<dbReference type="GO" id="GO:0005829">
    <property type="term" value="C:cytosol"/>
    <property type="evidence" value="ECO:0007669"/>
    <property type="project" value="TreeGrafter"/>
</dbReference>
<dbReference type="GO" id="GO:0042709">
    <property type="term" value="C:succinate-CoA ligase complex"/>
    <property type="evidence" value="ECO:0007669"/>
    <property type="project" value="TreeGrafter"/>
</dbReference>
<dbReference type="GO" id="GO:0005524">
    <property type="term" value="F:ATP binding"/>
    <property type="evidence" value="ECO:0007669"/>
    <property type="project" value="UniProtKB-UniRule"/>
</dbReference>
<dbReference type="GO" id="GO:0000287">
    <property type="term" value="F:magnesium ion binding"/>
    <property type="evidence" value="ECO:0007669"/>
    <property type="project" value="UniProtKB-UniRule"/>
</dbReference>
<dbReference type="GO" id="GO:0004775">
    <property type="term" value="F:succinate-CoA ligase (ADP-forming) activity"/>
    <property type="evidence" value="ECO:0007669"/>
    <property type="project" value="UniProtKB-UniRule"/>
</dbReference>
<dbReference type="GO" id="GO:0004776">
    <property type="term" value="F:succinate-CoA ligase (GDP-forming) activity"/>
    <property type="evidence" value="ECO:0007669"/>
    <property type="project" value="RHEA"/>
</dbReference>
<dbReference type="GO" id="GO:0006104">
    <property type="term" value="P:succinyl-CoA metabolic process"/>
    <property type="evidence" value="ECO:0007669"/>
    <property type="project" value="TreeGrafter"/>
</dbReference>
<dbReference type="GO" id="GO:0006099">
    <property type="term" value="P:tricarboxylic acid cycle"/>
    <property type="evidence" value="ECO:0007669"/>
    <property type="project" value="UniProtKB-UniRule"/>
</dbReference>
<dbReference type="FunFam" id="3.30.1490.20:FF:000002">
    <property type="entry name" value="Succinate--CoA ligase [ADP-forming] subunit beta"/>
    <property type="match status" value="1"/>
</dbReference>
<dbReference type="FunFam" id="3.30.470.20:FF:000002">
    <property type="entry name" value="Succinate--CoA ligase [ADP-forming] subunit beta"/>
    <property type="match status" value="1"/>
</dbReference>
<dbReference type="FunFam" id="3.40.50.261:FF:000001">
    <property type="entry name" value="Succinate--CoA ligase [ADP-forming] subunit beta"/>
    <property type="match status" value="1"/>
</dbReference>
<dbReference type="Gene3D" id="3.30.1490.20">
    <property type="entry name" value="ATP-grasp fold, A domain"/>
    <property type="match status" value="1"/>
</dbReference>
<dbReference type="Gene3D" id="3.30.470.20">
    <property type="entry name" value="ATP-grasp fold, B domain"/>
    <property type="match status" value="1"/>
</dbReference>
<dbReference type="Gene3D" id="3.40.50.261">
    <property type="entry name" value="Succinyl-CoA synthetase domains"/>
    <property type="match status" value="1"/>
</dbReference>
<dbReference type="HAMAP" id="MF_00558">
    <property type="entry name" value="Succ_CoA_beta"/>
    <property type="match status" value="1"/>
</dbReference>
<dbReference type="InterPro" id="IPR011761">
    <property type="entry name" value="ATP-grasp"/>
</dbReference>
<dbReference type="InterPro" id="IPR013650">
    <property type="entry name" value="ATP-grasp_succ-CoA_synth-type"/>
</dbReference>
<dbReference type="InterPro" id="IPR013815">
    <property type="entry name" value="ATP_grasp_subdomain_1"/>
</dbReference>
<dbReference type="InterPro" id="IPR017866">
    <property type="entry name" value="Succ-CoA_synthase_bsu_CS"/>
</dbReference>
<dbReference type="InterPro" id="IPR005811">
    <property type="entry name" value="SUCC_ACL_C"/>
</dbReference>
<dbReference type="InterPro" id="IPR005809">
    <property type="entry name" value="Succ_CoA_ligase-like_bsu"/>
</dbReference>
<dbReference type="InterPro" id="IPR016102">
    <property type="entry name" value="Succinyl-CoA_synth-like"/>
</dbReference>
<dbReference type="NCBIfam" id="NF001913">
    <property type="entry name" value="PRK00696.1"/>
    <property type="match status" value="1"/>
</dbReference>
<dbReference type="NCBIfam" id="TIGR01016">
    <property type="entry name" value="sucCoAbeta"/>
    <property type="match status" value="1"/>
</dbReference>
<dbReference type="PANTHER" id="PTHR11815:SF10">
    <property type="entry name" value="SUCCINATE--COA LIGASE [GDP-FORMING] SUBUNIT BETA, MITOCHONDRIAL"/>
    <property type="match status" value="1"/>
</dbReference>
<dbReference type="PANTHER" id="PTHR11815">
    <property type="entry name" value="SUCCINYL-COA SYNTHETASE BETA CHAIN"/>
    <property type="match status" value="1"/>
</dbReference>
<dbReference type="Pfam" id="PF08442">
    <property type="entry name" value="ATP-grasp_2"/>
    <property type="match status" value="1"/>
</dbReference>
<dbReference type="Pfam" id="PF00549">
    <property type="entry name" value="Ligase_CoA"/>
    <property type="match status" value="1"/>
</dbReference>
<dbReference type="PIRSF" id="PIRSF001554">
    <property type="entry name" value="SucCS_beta"/>
    <property type="match status" value="1"/>
</dbReference>
<dbReference type="SUPFAM" id="SSF56059">
    <property type="entry name" value="Glutathione synthetase ATP-binding domain-like"/>
    <property type="match status" value="1"/>
</dbReference>
<dbReference type="SUPFAM" id="SSF52210">
    <property type="entry name" value="Succinyl-CoA synthetase domains"/>
    <property type="match status" value="1"/>
</dbReference>
<dbReference type="PROSITE" id="PS50975">
    <property type="entry name" value="ATP_GRASP"/>
    <property type="match status" value="1"/>
</dbReference>
<dbReference type="PROSITE" id="PS01217">
    <property type="entry name" value="SUCCINYL_COA_LIG_3"/>
    <property type="match status" value="1"/>
</dbReference>
<gene>
    <name evidence="1" type="primary">sucC</name>
    <name type="ordered locus">Cvib_0553</name>
</gene>
<evidence type="ECO:0000255" key="1">
    <source>
        <dbReference type="HAMAP-Rule" id="MF_00558"/>
    </source>
</evidence>
<proteinExistence type="inferred from homology"/>
<keyword id="KW-0067">ATP-binding</keyword>
<keyword id="KW-0436">Ligase</keyword>
<keyword id="KW-0460">Magnesium</keyword>
<keyword id="KW-0479">Metal-binding</keyword>
<keyword id="KW-0547">Nucleotide-binding</keyword>
<keyword id="KW-0816">Tricarboxylic acid cycle</keyword>
<protein>
    <recommendedName>
        <fullName evidence="1">Succinate--CoA ligase [ADP-forming] subunit beta</fullName>
        <ecNumber evidence="1">6.2.1.5</ecNumber>
    </recommendedName>
    <alternativeName>
        <fullName evidence="1">Succinyl-CoA synthetase subunit beta</fullName>
        <shortName evidence="1">SCS-beta</shortName>
    </alternativeName>
</protein>
<comment type="function">
    <text evidence="1">Succinyl-CoA synthetase functions in the citric acid cycle (TCA), coupling the hydrolysis of succinyl-CoA to the synthesis of either ATP or GTP and thus represents the only step of substrate-level phosphorylation in the TCA. The beta subunit provides nucleotide specificity of the enzyme and binds the substrate succinate, while the binding sites for coenzyme A and phosphate are found in the alpha subunit.</text>
</comment>
<comment type="catalytic activity">
    <reaction evidence="1">
        <text>succinate + ATP + CoA = succinyl-CoA + ADP + phosphate</text>
        <dbReference type="Rhea" id="RHEA:17661"/>
        <dbReference type="ChEBI" id="CHEBI:30031"/>
        <dbReference type="ChEBI" id="CHEBI:30616"/>
        <dbReference type="ChEBI" id="CHEBI:43474"/>
        <dbReference type="ChEBI" id="CHEBI:57287"/>
        <dbReference type="ChEBI" id="CHEBI:57292"/>
        <dbReference type="ChEBI" id="CHEBI:456216"/>
        <dbReference type="EC" id="6.2.1.5"/>
    </reaction>
    <physiologicalReaction direction="right-to-left" evidence="1">
        <dbReference type="Rhea" id="RHEA:17663"/>
    </physiologicalReaction>
</comment>
<comment type="catalytic activity">
    <reaction evidence="1">
        <text>GTP + succinate + CoA = succinyl-CoA + GDP + phosphate</text>
        <dbReference type="Rhea" id="RHEA:22120"/>
        <dbReference type="ChEBI" id="CHEBI:30031"/>
        <dbReference type="ChEBI" id="CHEBI:37565"/>
        <dbReference type="ChEBI" id="CHEBI:43474"/>
        <dbReference type="ChEBI" id="CHEBI:57287"/>
        <dbReference type="ChEBI" id="CHEBI:57292"/>
        <dbReference type="ChEBI" id="CHEBI:58189"/>
    </reaction>
    <physiologicalReaction direction="right-to-left" evidence="1">
        <dbReference type="Rhea" id="RHEA:22122"/>
    </physiologicalReaction>
</comment>
<comment type="cofactor">
    <cofactor evidence="1">
        <name>Mg(2+)</name>
        <dbReference type="ChEBI" id="CHEBI:18420"/>
    </cofactor>
    <text evidence="1">Binds 1 Mg(2+) ion per subunit.</text>
</comment>
<comment type="pathway">
    <text evidence="1">Carbohydrate metabolism; tricarboxylic acid cycle; succinate from succinyl-CoA (ligase route): step 1/1.</text>
</comment>
<comment type="subunit">
    <text evidence="1">Heterotetramer of two alpha and two beta subunits.</text>
</comment>
<comment type="similarity">
    <text evidence="1">Belongs to the succinate/malate CoA ligase beta subunit family.</text>
</comment>
<organism>
    <name type="scientific">Chlorobium phaeovibrioides (strain DSM 265 / 1930)</name>
    <name type="common">Prosthecochloris vibrioformis (strain DSM 265)</name>
    <dbReference type="NCBI Taxonomy" id="290318"/>
    <lineage>
        <taxon>Bacteria</taxon>
        <taxon>Pseudomonadati</taxon>
        <taxon>Chlorobiota</taxon>
        <taxon>Chlorobiia</taxon>
        <taxon>Chlorobiales</taxon>
        <taxon>Chlorobiaceae</taxon>
        <taxon>Chlorobium/Pelodictyon group</taxon>
        <taxon>Chlorobium</taxon>
    </lineage>
</organism>